<gene>
    <name evidence="1" type="primary">purM</name>
    <name type="ordered locus">syc0689_c</name>
</gene>
<sequence>MNYREAGVDIEAGRAFVGDIRSLVESTRRPGVLGGLGGFGGFFELPSGYRQPVLVSGTDGVGTKLKIAHQVGRHDSIGIDLVAMCVNDILTAGAEPLYFLDYLATGRLDREQLTAVVQGIAAGCRESGCALLGGETAEMPGFYEAGEYDVAGFAVGIAEKSELLDGSQVQLGDVAIALASSGVHSNGYSLVRKVVANSGLDWTSSQTIFEGQSLGDVFLTPTRLYVKPILAAKAQKIPIHGMAHITGGGLPENLPRCLGPNQTVAIDLESWKWPTVFRWLAKQGNIADSEMFNTFNMGVGLVVIVPAAAETQALKFFKAQGQTAWTLGEVVTGDGTLIGLP</sequence>
<name>PUR5_SYNP6</name>
<feature type="chain" id="PRO_0000258421" description="Phosphoribosylformylglycinamidine cyclo-ligase">
    <location>
        <begin position="1"/>
        <end position="341"/>
    </location>
</feature>
<comment type="catalytic activity">
    <reaction evidence="1">
        <text>2-formamido-N(1)-(5-O-phospho-beta-D-ribosyl)acetamidine + ATP = 5-amino-1-(5-phospho-beta-D-ribosyl)imidazole + ADP + phosphate + H(+)</text>
        <dbReference type="Rhea" id="RHEA:23032"/>
        <dbReference type="ChEBI" id="CHEBI:15378"/>
        <dbReference type="ChEBI" id="CHEBI:30616"/>
        <dbReference type="ChEBI" id="CHEBI:43474"/>
        <dbReference type="ChEBI" id="CHEBI:137981"/>
        <dbReference type="ChEBI" id="CHEBI:147287"/>
        <dbReference type="ChEBI" id="CHEBI:456216"/>
        <dbReference type="EC" id="6.3.3.1"/>
    </reaction>
</comment>
<comment type="pathway">
    <text evidence="1">Purine metabolism; IMP biosynthesis via de novo pathway; 5-amino-1-(5-phospho-D-ribosyl)imidazole from N(2)-formyl-N(1)-(5-phospho-D-ribosyl)glycinamide: step 2/2.</text>
</comment>
<comment type="subcellular location">
    <subcellularLocation>
        <location evidence="1">Cytoplasm</location>
    </subcellularLocation>
</comment>
<comment type="similarity">
    <text evidence="1">Belongs to the AIR synthase family.</text>
</comment>
<comment type="sequence caution" evidence="2">
    <conflict type="erroneous initiation">
        <sequence resource="EMBL-CDS" id="BAD78879"/>
    </conflict>
</comment>
<organism>
    <name type="scientific">Synechococcus sp. (strain ATCC 27144 / PCC 6301 / SAUG 1402/1)</name>
    <name type="common">Anacystis nidulans</name>
    <dbReference type="NCBI Taxonomy" id="269084"/>
    <lineage>
        <taxon>Bacteria</taxon>
        <taxon>Bacillati</taxon>
        <taxon>Cyanobacteriota</taxon>
        <taxon>Cyanophyceae</taxon>
        <taxon>Synechococcales</taxon>
        <taxon>Synechococcaceae</taxon>
        <taxon>Synechococcus</taxon>
    </lineage>
</organism>
<evidence type="ECO:0000255" key="1">
    <source>
        <dbReference type="HAMAP-Rule" id="MF_00741"/>
    </source>
</evidence>
<evidence type="ECO:0000305" key="2"/>
<dbReference type="EC" id="6.3.3.1" evidence="1"/>
<dbReference type="EMBL" id="AP008231">
    <property type="protein sequence ID" value="BAD78879.1"/>
    <property type="status" value="ALT_INIT"/>
    <property type="molecule type" value="Genomic_DNA"/>
</dbReference>
<dbReference type="RefSeq" id="WP_011377763.1">
    <property type="nucleotide sequence ID" value="NZ_CP085785.1"/>
</dbReference>
<dbReference type="SMR" id="Q5N490"/>
<dbReference type="GeneID" id="72429698"/>
<dbReference type="KEGG" id="syc:syc0689_c"/>
<dbReference type="eggNOG" id="COG0150">
    <property type="taxonomic scope" value="Bacteria"/>
</dbReference>
<dbReference type="UniPathway" id="UPA00074">
    <property type="reaction ID" value="UER00129"/>
</dbReference>
<dbReference type="Proteomes" id="UP000001175">
    <property type="component" value="Chromosome"/>
</dbReference>
<dbReference type="GO" id="GO:0005829">
    <property type="term" value="C:cytosol"/>
    <property type="evidence" value="ECO:0007669"/>
    <property type="project" value="TreeGrafter"/>
</dbReference>
<dbReference type="GO" id="GO:0005524">
    <property type="term" value="F:ATP binding"/>
    <property type="evidence" value="ECO:0007669"/>
    <property type="project" value="UniProtKB-KW"/>
</dbReference>
<dbReference type="GO" id="GO:0004637">
    <property type="term" value="F:phosphoribosylamine-glycine ligase activity"/>
    <property type="evidence" value="ECO:0007669"/>
    <property type="project" value="TreeGrafter"/>
</dbReference>
<dbReference type="GO" id="GO:0004641">
    <property type="term" value="F:phosphoribosylformylglycinamidine cyclo-ligase activity"/>
    <property type="evidence" value="ECO:0007669"/>
    <property type="project" value="UniProtKB-UniRule"/>
</dbReference>
<dbReference type="GO" id="GO:0006189">
    <property type="term" value="P:'de novo' IMP biosynthetic process"/>
    <property type="evidence" value="ECO:0007669"/>
    <property type="project" value="UniProtKB-UniRule"/>
</dbReference>
<dbReference type="GO" id="GO:0046084">
    <property type="term" value="P:adenine biosynthetic process"/>
    <property type="evidence" value="ECO:0007669"/>
    <property type="project" value="TreeGrafter"/>
</dbReference>
<dbReference type="CDD" id="cd02196">
    <property type="entry name" value="PurM"/>
    <property type="match status" value="1"/>
</dbReference>
<dbReference type="FunFam" id="3.30.1330.10:FF:000001">
    <property type="entry name" value="Phosphoribosylformylglycinamidine cyclo-ligase"/>
    <property type="match status" value="1"/>
</dbReference>
<dbReference type="FunFam" id="3.90.650.10:FF:000001">
    <property type="entry name" value="Phosphoribosylformylglycinamidine cyclo-ligase"/>
    <property type="match status" value="1"/>
</dbReference>
<dbReference type="Gene3D" id="3.90.650.10">
    <property type="entry name" value="PurM-like C-terminal domain"/>
    <property type="match status" value="1"/>
</dbReference>
<dbReference type="Gene3D" id="3.30.1330.10">
    <property type="entry name" value="PurM-like, N-terminal domain"/>
    <property type="match status" value="1"/>
</dbReference>
<dbReference type="HAMAP" id="MF_00741">
    <property type="entry name" value="AIRS"/>
    <property type="match status" value="1"/>
</dbReference>
<dbReference type="InterPro" id="IPR010918">
    <property type="entry name" value="PurM-like_C_dom"/>
</dbReference>
<dbReference type="InterPro" id="IPR036676">
    <property type="entry name" value="PurM-like_C_sf"/>
</dbReference>
<dbReference type="InterPro" id="IPR016188">
    <property type="entry name" value="PurM-like_N"/>
</dbReference>
<dbReference type="InterPro" id="IPR036921">
    <property type="entry name" value="PurM-like_N_sf"/>
</dbReference>
<dbReference type="InterPro" id="IPR004733">
    <property type="entry name" value="PurM_cligase"/>
</dbReference>
<dbReference type="NCBIfam" id="TIGR00878">
    <property type="entry name" value="purM"/>
    <property type="match status" value="1"/>
</dbReference>
<dbReference type="PANTHER" id="PTHR10520:SF12">
    <property type="entry name" value="TRIFUNCTIONAL PURINE BIOSYNTHETIC PROTEIN ADENOSINE-3"/>
    <property type="match status" value="1"/>
</dbReference>
<dbReference type="PANTHER" id="PTHR10520">
    <property type="entry name" value="TRIFUNCTIONAL PURINE BIOSYNTHETIC PROTEIN ADENOSINE-3-RELATED"/>
    <property type="match status" value="1"/>
</dbReference>
<dbReference type="Pfam" id="PF00586">
    <property type="entry name" value="AIRS"/>
    <property type="match status" value="1"/>
</dbReference>
<dbReference type="Pfam" id="PF02769">
    <property type="entry name" value="AIRS_C"/>
    <property type="match status" value="1"/>
</dbReference>
<dbReference type="SUPFAM" id="SSF56042">
    <property type="entry name" value="PurM C-terminal domain-like"/>
    <property type="match status" value="1"/>
</dbReference>
<dbReference type="SUPFAM" id="SSF55326">
    <property type="entry name" value="PurM N-terminal domain-like"/>
    <property type="match status" value="1"/>
</dbReference>
<protein>
    <recommendedName>
        <fullName evidence="1">Phosphoribosylformylglycinamidine cyclo-ligase</fullName>
        <ecNumber evidence="1">6.3.3.1</ecNumber>
    </recommendedName>
    <alternativeName>
        <fullName evidence="1">AIR synthase</fullName>
    </alternativeName>
    <alternativeName>
        <fullName evidence="1">AIRS</fullName>
    </alternativeName>
    <alternativeName>
        <fullName evidence="1">Phosphoribosyl-aminoimidazole synthetase</fullName>
    </alternativeName>
</protein>
<accession>Q5N490</accession>
<reference key="1">
    <citation type="journal article" date="2007" name="Photosyn. Res.">
        <title>Complete nucleotide sequence of the freshwater unicellular cyanobacterium Synechococcus elongatus PCC 6301 chromosome: gene content and organization.</title>
        <authorList>
            <person name="Sugita C."/>
            <person name="Ogata K."/>
            <person name="Shikata M."/>
            <person name="Jikuya H."/>
            <person name="Takano J."/>
            <person name="Furumichi M."/>
            <person name="Kanehisa M."/>
            <person name="Omata T."/>
            <person name="Sugiura M."/>
            <person name="Sugita M."/>
        </authorList>
    </citation>
    <scope>NUCLEOTIDE SEQUENCE [LARGE SCALE GENOMIC DNA]</scope>
    <source>
        <strain>ATCC 27144 / PCC 6301 / SAUG 1402/1</strain>
    </source>
</reference>
<proteinExistence type="inferred from homology"/>
<keyword id="KW-0067">ATP-binding</keyword>
<keyword id="KW-0963">Cytoplasm</keyword>
<keyword id="KW-0436">Ligase</keyword>
<keyword id="KW-0547">Nucleotide-binding</keyword>
<keyword id="KW-0658">Purine biosynthesis</keyword>